<reference key="1">
    <citation type="journal article" date="2017" name="FEBS J.">
        <title>Structural plasticity of Mini-M conotoxins: expression of all mini-M subtypes by Conus regius.</title>
        <authorList>
            <person name="Franco A."/>
            <person name="Dovell S."/>
            <person name="Moller C."/>
            <person name="Grandal M."/>
            <person name="Clark E."/>
            <person name="Mari F."/>
        </authorList>
    </citation>
    <scope>NUCLEOTIDE SEQUENCE [MRNA]</scope>
    <source>
        <tissue>Venom duct</tissue>
    </source>
</reference>
<proteinExistence type="evidence at transcript level"/>
<comment type="subcellular location">
    <subcellularLocation>
        <location evidence="5">Secreted</location>
    </subcellularLocation>
</comment>
<comment type="tissue specificity">
    <text evidence="5">Expressed by the venom duct.</text>
</comment>
<comment type="domain">
    <text evidence="4">The cysteine framework is III (CC-C-C-CC). Classified in the M-1 branch, since 1 residue stands between the fourth and the fifth cysteine residues.</text>
</comment>
<comment type="similarity">
    <text evidence="4">Belongs to the conotoxin M superfamily.</text>
</comment>
<evidence type="ECO:0000250" key="1">
    <source>
        <dbReference type="UniProtKB" id="Q5EHP3"/>
    </source>
</evidence>
<evidence type="ECO:0000256" key="2">
    <source>
        <dbReference type="SAM" id="MobiDB-lite"/>
    </source>
</evidence>
<evidence type="ECO:0000303" key="3">
    <source>
    </source>
</evidence>
<evidence type="ECO:0000305" key="4"/>
<evidence type="ECO:0000305" key="5">
    <source>
    </source>
</evidence>
<evidence type="ECO:0000312" key="6">
    <source>
        <dbReference type="EMBL" id="AUJ88065.1"/>
    </source>
</evidence>
<organism>
    <name type="scientific">Conus regius</name>
    <name type="common">Crown cone</name>
    <dbReference type="NCBI Taxonomy" id="101314"/>
    <lineage>
        <taxon>Eukaryota</taxon>
        <taxon>Metazoa</taxon>
        <taxon>Spiralia</taxon>
        <taxon>Lophotrochozoa</taxon>
        <taxon>Mollusca</taxon>
        <taxon>Gastropoda</taxon>
        <taxon>Caenogastropoda</taxon>
        <taxon>Neogastropoda</taxon>
        <taxon>Conoidea</taxon>
        <taxon>Conidae</taxon>
        <taxon>Conus</taxon>
        <taxon>Stephanoconus</taxon>
    </lineage>
</organism>
<accession>A0A2I6EDL7</accession>
<dbReference type="EMBL" id="MF588941">
    <property type="protein sequence ID" value="AUJ88065.1"/>
    <property type="molecule type" value="mRNA"/>
</dbReference>
<dbReference type="GO" id="GO:0005576">
    <property type="term" value="C:extracellular region"/>
    <property type="evidence" value="ECO:0007669"/>
    <property type="project" value="UniProtKB-SubCell"/>
</dbReference>
<dbReference type="GO" id="GO:0008200">
    <property type="term" value="F:ion channel inhibitor activity"/>
    <property type="evidence" value="ECO:0007669"/>
    <property type="project" value="InterPro"/>
</dbReference>
<dbReference type="GO" id="GO:0090729">
    <property type="term" value="F:toxin activity"/>
    <property type="evidence" value="ECO:0007669"/>
    <property type="project" value="UniProtKB-KW"/>
</dbReference>
<dbReference type="InterPro" id="IPR004214">
    <property type="entry name" value="Conotoxin"/>
</dbReference>
<dbReference type="Pfam" id="PF02950">
    <property type="entry name" value="Conotoxin"/>
    <property type="match status" value="1"/>
</dbReference>
<feature type="signal peptide" evidence="4">
    <location>
        <begin position="1" status="less than"/>
        <end position="15"/>
    </location>
</feature>
<feature type="propeptide" id="PRO_0000444774" evidence="5">
    <location>
        <begin position="16"/>
        <end position="45"/>
    </location>
</feature>
<feature type="peptide" id="PRO_5014321495" description="Conotoxin reg3.7" evidence="5">
    <location>
        <begin position="46"/>
        <end position="61"/>
    </location>
</feature>
<feature type="region of interest" description="Disordered" evidence="2">
    <location>
        <begin position="17"/>
        <end position="37"/>
    </location>
</feature>
<feature type="modified residue" description="Cysteine amide" evidence="4">
    <location>
        <position position="61"/>
    </location>
</feature>
<feature type="disulfide bond" evidence="1">
    <location>
        <begin position="46"/>
        <end position="60"/>
    </location>
</feature>
<feature type="disulfide bond" evidence="1">
    <location>
        <begin position="47"/>
        <end position="58"/>
    </location>
</feature>
<feature type="disulfide bond" evidence="1">
    <location>
        <begin position="52"/>
        <end position="61"/>
    </location>
</feature>
<feature type="non-terminal residue" evidence="6">
    <location>
        <position position="1"/>
    </location>
</feature>
<keyword id="KW-0027">Amidation</keyword>
<keyword id="KW-0165">Cleavage on pair of basic residues</keyword>
<keyword id="KW-1015">Disulfide bond</keyword>
<keyword id="KW-0964">Secreted</keyword>
<keyword id="KW-0732">Signal</keyword>
<keyword id="KW-0800">Toxin</keyword>
<name>CM37_CONRE</name>
<protein>
    <recommendedName>
        <fullName evidence="3">Conotoxin reg3.7</fullName>
        <shortName evidence="6">Rg3.7</shortName>
    </recommendedName>
</protein>
<sequence length="62" mass="6918">RVLLTICLLLFPLSALPLDGDQPADQPARHMQSAERNPRFDPVKRCCPYPSCIDIPFCDCCG</sequence>